<proteinExistence type="inferred from homology"/>
<comment type="function">
    <text evidence="1">Prevents the cell division inhibition by proteins MinC and MinD at internal division sites while permitting inhibition at polar sites. This ensures cell division at the proper site by restricting the formation of a division septum at the midpoint of the long axis of the cell.</text>
</comment>
<comment type="similarity">
    <text evidence="1">Belongs to the MinE family.</text>
</comment>
<reference key="1">
    <citation type="journal article" date="2009" name="J. Bacteriol.">
        <title>Genomic sequencing reveals regulatory mutations and recombinational events in the widely used MC4100 lineage of Escherichia coli K-12.</title>
        <authorList>
            <person name="Ferenci T."/>
            <person name="Zhou Z."/>
            <person name="Betteridge T."/>
            <person name="Ren Y."/>
            <person name="Liu Y."/>
            <person name="Feng L."/>
            <person name="Reeves P.R."/>
            <person name="Wang L."/>
        </authorList>
    </citation>
    <scope>NUCLEOTIDE SEQUENCE [LARGE SCALE GENOMIC DNA]</scope>
    <source>
        <strain>K12 / MC4100 / BW2952</strain>
    </source>
</reference>
<dbReference type="EMBL" id="CP001396">
    <property type="protein sequence ID" value="ACR62127.1"/>
    <property type="molecule type" value="Genomic_DNA"/>
</dbReference>
<dbReference type="RefSeq" id="WP_001185665.1">
    <property type="nucleotide sequence ID" value="NC_012759.1"/>
</dbReference>
<dbReference type="SMR" id="C4ZS91"/>
<dbReference type="GeneID" id="93776260"/>
<dbReference type="KEGG" id="ebw:BWG_0999"/>
<dbReference type="HOGENOM" id="CLU_137929_2_2_6"/>
<dbReference type="GO" id="GO:0051301">
    <property type="term" value="P:cell division"/>
    <property type="evidence" value="ECO:0007669"/>
    <property type="project" value="UniProtKB-KW"/>
</dbReference>
<dbReference type="GO" id="GO:0032955">
    <property type="term" value="P:regulation of division septum assembly"/>
    <property type="evidence" value="ECO:0007669"/>
    <property type="project" value="InterPro"/>
</dbReference>
<dbReference type="FunFam" id="3.30.1070.10:FF:000001">
    <property type="entry name" value="Cell division topological specificity factor"/>
    <property type="match status" value="1"/>
</dbReference>
<dbReference type="Gene3D" id="3.30.1070.10">
    <property type="entry name" value="Cell division topological specificity factor MinE"/>
    <property type="match status" value="1"/>
</dbReference>
<dbReference type="HAMAP" id="MF_00262">
    <property type="entry name" value="MinE"/>
    <property type="match status" value="1"/>
</dbReference>
<dbReference type="InterPro" id="IPR005527">
    <property type="entry name" value="MinE"/>
</dbReference>
<dbReference type="InterPro" id="IPR036707">
    <property type="entry name" value="MinE_sf"/>
</dbReference>
<dbReference type="NCBIfam" id="TIGR01215">
    <property type="entry name" value="minE"/>
    <property type="match status" value="1"/>
</dbReference>
<dbReference type="NCBIfam" id="NF001422">
    <property type="entry name" value="PRK00296.1"/>
    <property type="match status" value="1"/>
</dbReference>
<dbReference type="Pfam" id="PF03776">
    <property type="entry name" value="MinE"/>
    <property type="match status" value="1"/>
</dbReference>
<dbReference type="SUPFAM" id="SSF55229">
    <property type="entry name" value="Cell division protein MinE topological specificity domain"/>
    <property type="match status" value="1"/>
</dbReference>
<name>MINE_ECOBW</name>
<feature type="chain" id="PRO_1000204679" description="Cell division topological specificity factor">
    <location>
        <begin position="1"/>
        <end position="88"/>
    </location>
</feature>
<keyword id="KW-0131">Cell cycle</keyword>
<keyword id="KW-0132">Cell division</keyword>
<organism>
    <name type="scientific">Escherichia coli (strain K12 / MC4100 / BW2952)</name>
    <dbReference type="NCBI Taxonomy" id="595496"/>
    <lineage>
        <taxon>Bacteria</taxon>
        <taxon>Pseudomonadati</taxon>
        <taxon>Pseudomonadota</taxon>
        <taxon>Gammaproteobacteria</taxon>
        <taxon>Enterobacterales</taxon>
        <taxon>Enterobacteriaceae</taxon>
        <taxon>Escherichia</taxon>
    </lineage>
</organism>
<gene>
    <name evidence="1" type="primary">minE</name>
    <name type="ordered locus">BWG_0999</name>
</gene>
<protein>
    <recommendedName>
        <fullName evidence="1">Cell division topological specificity factor</fullName>
    </recommendedName>
</protein>
<sequence length="88" mass="10235">MALLDFFLSRKKNTANIAKERLQIIVAERRRSDAEPHYLPQLRKDILEVICKYVQIDPEMVTVQLEQKDGDISILELNVTLPEAEELK</sequence>
<accession>C4ZS91</accession>
<evidence type="ECO:0000255" key="1">
    <source>
        <dbReference type="HAMAP-Rule" id="MF_00262"/>
    </source>
</evidence>